<dbReference type="EMBL" id="BA000043">
    <property type="protein sequence ID" value="BAD75537.1"/>
    <property type="molecule type" value="Genomic_DNA"/>
</dbReference>
<dbReference type="RefSeq" id="WP_011230752.1">
    <property type="nucleotide sequence ID" value="NC_006510.1"/>
</dbReference>
<dbReference type="SMR" id="Q5L0J9"/>
<dbReference type="STRING" id="235909.GK1252"/>
<dbReference type="GeneID" id="32063146"/>
<dbReference type="KEGG" id="gka:GK1252"/>
<dbReference type="eggNOG" id="COG0233">
    <property type="taxonomic scope" value="Bacteria"/>
</dbReference>
<dbReference type="HOGENOM" id="CLU_073981_2_0_9"/>
<dbReference type="Proteomes" id="UP000001172">
    <property type="component" value="Chromosome"/>
</dbReference>
<dbReference type="GO" id="GO:0005737">
    <property type="term" value="C:cytoplasm"/>
    <property type="evidence" value="ECO:0007669"/>
    <property type="project" value="UniProtKB-SubCell"/>
</dbReference>
<dbReference type="GO" id="GO:0043023">
    <property type="term" value="F:ribosomal large subunit binding"/>
    <property type="evidence" value="ECO:0007669"/>
    <property type="project" value="TreeGrafter"/>
</dbReference>
<dbReference type="GO" id="GO:0006415">
    <property type="term" value="P:translational termination"/>
    <property type="evidence" value="ECO:0007669"/>
    <property type="project" value="UniProtKB-UniRule"/>
</dbReference>
<dbReference type="CDD" id="cd00520">
    <property type="entry name" value="RRF"/>
    <property type="match status" value="1"/>
</dbReference>
<dbReference type="FunFam" id="1.10.132.20:FF:000001">
    <property type="entry name" value="Ribosome-recycling factor"/>
    <property type="match status" value="1"/>
</dbReference>
<dbReference type="FunFam" id="3.30.1360.40:FF:000001">
    <property type="entry name" value="Ribosome-recycling factor"/>
    <property type="match status" value="1"/>
</dbReference>
<dbReference type="Gene3D" id="3.30.1360.40">
    <property type="match status" value="1"/>
</dbReference>
<dbReference type="Gene3D" id="1.10.132.20">
    <property type="entry name" value="Ribosome-recycling factor"/>
    <property type="match status" value="1"/>
</dbReference>
<dbReference type="HAMAP" id="MF_00040">
    <property type="entry name" value="RRF"/>
    <property type="match status" value="1"/>
</dbReference>
<dbReference type="InterPro" id="IPR002661">
    <property type="entry name" value="Ribosome_recyc_fac"/>
</dbReference>
<dbReference type="InterPro" id="IPR023584">
    <property type="entry name" value="Ribosome_recyc_fac_dom"/>
</dbReference>
<dbReference type="InterPro" id="IPR036191">
    <property type="entry name" value="RRF_sf"/>
</dbReference>
<dbReference type="NCBIfam" id="TIGR00496">
    <property type="entry name" value="frr"/>
    <property type="match status" value="1"/>
</dbReference>
<dbReference type="PANTHER" id="PTHR20982:SF3">
    <property type="entry name" value="MITOCHONDRIAL RIBOSOME RECYCLING FACTOR PSEUDO 1"/>
    <property type="match status" value="1"/>
</dbReference>
<dbReference type="PANTHER" id="PTHR20982">
    <property type="entry name" value="RIBOSOME RECYCLING FACTOR"/>
    <property type="match status" value="1"/>
</dbReference>
<dbReference type="Pfam" id="PF01765">
    <property type="entry name" value="RRF"/>
    <property type="match status" value="1"/>
</dbReference>
<dbReference type="SUPFAM" id="SSF55194">
    <property type="entry name" value="Ribosome recycling factor, RRF"/>
    <property type="match status" value="1"/>
</dbReference>
<keyword id="KW-0963">Cytoplasm</keyword>
<keyword id="KW-0648">Protein biosynthesis</keyword>
<keyword id="KW-1185">Reference proteome</keyword>
<organism>
    <name type="scientific">Geobacillus kaustophilus (strain HTA426)</name>
    <dbReference type="NCBI Taxonomy" id="235909"/>
    <lineage>
        <taxon>Bacteria</taxon>
        <taxon>Bacillati</taxon>
        <taxon>Bacillota</taxon>
        <taxon>Bacilli</taxon>
        <taxon>Bacillales</taxon>
        <taxon>Anoxybacillaceae</taxon>
        <taxon>Geobacillus</taxon>
        <taxon>Geobacillus thermoleovorans group</taxon>
    </lineage>
</organism>
<name>RRF_GEOKA</name>
<accession>Q5L0J9</accession>
<gene>
    <name evidence="1" type="primary">frr</name>
    <name type="ordered locus">GK1252</name>
</gene>
<comment type="function">
    <text evidence="1">Responsible for the release of ribosomes from messenger RNA at the termination of protein biosynthesis. May increase the efficiency of translation by recycling ribosomes from one round of translation to another.</text>
</comment>
<comment type="subcellular location">
    <subcellularLocation>
        <location evidence="1">Cytoplasm</location>
    </subcellularLocation>
</comment>
<comment type="similarity">
    <text evidence="1">Belongs to the RRF family.</text>
</comment>
<feature type="chain" id="PRO_0000167463" description="Ribosome-recycling factor">
    <location>
        <begin position="1"/>
        <end position="185"/>
    </location>
</feature>
<sequence>MAKQVIQQAKEKMDKAVQAFTRELASIRAGRANAGLLEKVTVDYYGVPTPINQLASISVPEARLLVIQPYDKSAIKEMEKAILASDLGLTPSNDGSVIRLVIPPLTEERRRELAKLVKKYSEDAKVAVRNIRRDANDELKKLEKNGEITEDELRSYTDEVQKLTDDHIAKIDAITKEKEKEVMEV</sequence>
<protein>
    <recommendedName>
        <fullName evidence="1">Ribosome-recycling factor</fullName>
        <shortName evidence="1">RRF</shortName>
    </recommendedName>
    <alternativeName>
        <fullName evidence="1">Ribosome-releasing factor</fullName>
    </alternativeName>
</protein>
<reference key="1">
    <citation type="journal article" date="2004" name="Nucleic Acids Res.">
        <title>Thermoadaptation trait revealed by the genome sequence of thermophilic Geobacillus kaustophilus.</title>
        <authorList>
            <person name="Takami H."/>
            <person name="Takaki Y."/>
            <person name="Chee G.-J."/>
            <person name="Nishi S."/>
            <person name="Shimamura S."/>
            <person name="Suzuki H."/>
            <person name="Matsui S."/>
            <person name="Uchiyama I."/>
        </authorList>
    </citation>
    <scope>NUCLEOTIDE SEQUENCE [LARGE SCALE GENOMIC DNA]</scope>
    <source>
        <strain>HTA426</strain>
    </source>
</reference>
<proteinExistence type="inferred from homology"/>
<evidence type="ECO:0000255" key="1">
    <source>
        <dbReference type="HAMAP-Rule" id="MF_00040"/>
    </source>
</evidence>